<comment type="function">
    <text evidence="6">E3 ubiquitin-protein ligase that mediates ubiquitination of Delta receptors, which act as ligands of Notch proteins. Positively regulates the Delta-mediated Notch signaling by ubiquitinating the intracellular domain of Delta, leading to endocytosis of Delta receptors.</text>
</comment>
<comment type="catalytic activity">
    <reaction>
        <text>S-ubiquitinyl-[E2 ubiquitin-conjugating enzyme]-L-cysteine + [acceptor protein]-L-lysine = [E2 ubiquitin-conjugating enzyme]-L-cysteine + N(6)-ubiquitinyl-[acceptor protein]-L-lysine.</text>
        <dbReference type="EC" id="2.3.2.27"/>
    </reaction>
</comment>
<comment type="pathway">
    <text>Protein modification; protein ubiquitination.</text>
</comment>
<comment type="subunit">
    <text evidence="1">Interacts with actin monomer.</text>
</comment>
<comment type="subcellular location">
    <subcellularLocation>
        <location evidence="6">Cytoplasm</location>
    </subcellularLocation>
    <subcellularLocation>
        <location evidence="6">Endosome</location>
    </subcellularLocation>
    <text>Colocalizes with endosomal compartments.</text>
</comment>
<comment type="alternative products">
    <event type="alternative splicing"/>
    <isoform>
        <id>Q8R516-1</id>
        <name>1</name>
        <sequence type="displayed"/>
    </isoform>
    <isoform>
        <id>Q8R516-2</id>
        <name>2</name>
        <sequence type="described" ref="VSP_014397 VSP_014400 VSP_014401"/>
    </isoform>
    <isoform>
        <id>Q8R516-3</id>
        <name>3</name>
        <sequence type="described" ref="VSP_014398 VSP_014399"/>
    </isoform>
</comment>
<comment type="tissue specificity">
    <text evidence="6">Highly expressed in brain, heart, liver and kidney.</text>
</comment>
<comment type="developmental stage">
    <text evidence="6">Highly expressed in neonate and adult, but only slightly in embryos. In 10.5 dpc embryos, it is weakly expressed in the tail bud and limb buds. Expressed in the same pattern than MIB1 in the skin and intestine at postnatal day 1 (P1) and in the hair follicle in the skin in the adult.</text>
</comment>
<comment type="PTM">
    <text evidence="6">Ubiquitinated. Possibly via autoubiquitination.</text>
</comment>
<comment type="miscellaneous">
    <molecule>Isoform 3</molecule>
    <text evidence="9">May be produced at very low levels due to a premature stop codon in the mRNA, leading to nonsense-mediated mRNA decay.</text>
</comment>
<comment type="sequence caution" evidence="9">
    <conflict type="frameshift">
        <sequence resource="EMBL-CDS" id="BAB79447"/>
    </conflict>
</comment>
<comment type="sequence caution" evidence="9">
    <conflict type="frameshift">
        <sequence resource="EMBL-CDS" id="BAB86856"/>
    </conflict>
</comment>
<feature type="chain" id="PRO_0000055948" description="E3 ubiquitin-protein ligase MIB2">
    <location>
        <begin position="1"/>
        <end position="973"/>
    </location>
</feature>
<feature type="domain" description="MIB/HERC2 1" evidence="5">
    <location>
        <begin position="1"/>
        <end position="80"/>
    </location>
</feature>
<feature type="domain" description="MIB/HERC2 2" evidence="5">
    <location>
        <begin position="149"/>
        <end position="227"/>
    </location>
</feature>
<feature type="repeat" description="ANK 1">
    <location>
        <begin position="480"/>
        <end position="509"/>
    </location>
</feature>
<feature type="repeat" description="ANK 2">
    <location>
        <begin position="513"/>
        <end position="542"/>
    </location>
</feature>
<feature type="repeat" description="ANK 3">
    <location>
        <begin position="546"/>
        <end position="575"/>
    </location>
</feature>
<feature type="repeat" description="ANK 4">
    <location>
        <begin position="579"/>
        <end position="611"/>
    </location>
</feature>
<feature type="repeat" description="ANK 5">
    <location>
        <begin position="615"/>
        <end position="644"/>
    </location>
</feature>
<feature type="repeat" description="ANK 6">
    <location>
        <begin position="649"/>
        <end position="679"/>
    </location>
</feature>
<feature type="repeat" description="ANK 7">
    <location>
        <begin position="683"/>
        <end position="712"/>
    </location>
</feature>
<feature type="repeat" description="ANK 8">
    <location>
        <begin position="716"/>
        <end position="744"/>
    </location>
</feature>
<feature type="repeat" description="ANK 9">
    <location>
        <begin position="785"/>
        <end position="814"/>
    </location>
</feature>
<feature type="zinc finger region" description="ZZ-type" evidence="4">
    <location>
        <begin position="86"/>
        <end position="138"/>
    </location>
</feature>
<feature type="zinc finger region" description="RING-type 1" evidence="3">
    <location>
        <begin position="850"/>
        <end position="885"/>
    </location>
</feature>
<feature type="zinc finger region" description="RING-type 2" evidence="3">
    <location>
        <begin position="929"/>
        <end position="962"/>
    </location>
</feature>
<feature type="binding site" evidence="4">
    <location>
        <position position="91"/>
    </location>
    <ligand>
        <name>Zn(2+)</name>
        <dbReference type="ChEBI" id="CHEBI:29105"/>
        <label>1</label>
    </ligand>
</feature>
<feature type="binding site" evidence="4">
    <location>
        <position position="94"/>
    </location>
    <ligand>
        <name>Zn(2+)</name>
        <dbReference type="ChEBI" id="CHEBI:29105"/>
        <label>1</label>
    </ligand>
</feature>
<feature type="binding site" evidence="4">
    <location>
        <position position="106"/>
    </location>
    <ligand>
        <name>Zn(2+)</name>
        <dbReference type="ChEBI" id="CHEBI:29105"/>
        <label>2</label>
    </ligand>
</feature>
<feature type="binding site" evidence="4">
    <location>
        <position position="109"/>
    </location>
    <ligand>
        <name>Zn(2+)</name>
        <dbReference type="ChEBI" id="CHEBI:29105"/>
        <label>2</label>
    </ligand>
</feature>
<feature type="binding site" evidence="4">
    <location>
        <position position="115"/>
    </location>
    <ligand>
        <name>Zn(2+)</name>
        <dbReference type="ChEBI" id="CHEBI:29105"/>
        <label>1</label>
    </ligand>
</feature>
<feature type="binding site" evidence="4">
    <location>
        <position position="118"/>
    </location>
    <ligand>
        <name>Zn(2+)</name>
        <dbReference type="ChEBI" id="CHEBI:29105"/>
        <label>1</label>
    </ligand>
</feature>
<feature type="binding site" evidence="4">
    <location>
        <position position="124"/>
    </location>
    <ligand>
        <name>Zn(2+)</name>
        <dbReference type="ChEBI" id="CHEBI:29105"/>
        <label>2</label>
    </ligand>
</feature>
<feature type="binding site" evidence="4">
    <location>
        <position position="128"/>
    </location>
    <ligand>
        <name>Zn(2+)</name>
        <dbReference type="ChEBI" id="CHEBI:29105"/>
        <label>2</label>
    </ligand>
</feature>
<feature type="modified residue" description="Phosphoserine" evidence="2">
    <location>
        <position position="251"/>
    </location>
</feature>
<feature type="splice variant" id="VSP_014397" description="In isoform 2." evidence="8">
    <location>
        <begin position="289"/>
        <end position="324"/>
    </location>
</feature>
<feature type="splice variant" id="VSP_014398" description="In isoform 3." evidence="7">
    <original>FIGQMG</original>
    <variation>VSHLFC</variation>
    <location>
        <begin position="289"/>
        <end position="294"/>
    </location>
</feature>
<feature type="splice variant" id="VSP_014399" description="In isoform 3." evidence="7">
    <location>
        <begin position="295"/>
        <end position="973"/>
    </location>
</feature>
<feature type="splice variant" id="VSP_014400" description="In isoform 2." evidence="8">
    <location>
        <begin position="415"/>
        <end position="422"/>
    </location>
</feature>
<feature type="splice variant" id="VSP_014401" description="In isoform 2." evidence="8">
    <location>
        <begin position="467"/>
        <end position="474"/>
    </location>
</feature>
<feature type="mutagenesis site" description="No effect." evidence="6">
    <original>C</original>
    <variation>S</variation>
    <location>
        <position position="874"/>
    </location>
</feature>
<feature type="mutagenesis site" description="Abolishes ubiquitin ligase activity." evidence="6">
    <original>C</original>
    <variation>S</variation>
    <location>
        <position position="951"/>
    </location>
</feature>
<feature type="sequence conflict" description="In Ref. 2; BAB79447/BAB86856." evidence="9" ref="2">
    <original>I</original>
    <variation>T</variation>
    <location>
        <position position="89"/>
    </location>
</feature>
<feature type="sequence conflict" description="In Ref. 2; BAB79447/BAB86856." evidence="9" ref="2">
    <original>E</original>
    <variation>G</variation>
    <location>
        <position position="131"/>
    </location>
</feature>
<feature type="sequence conflict" description="In Ref. 2; BAB79447/BAB86856." evidence="9" ref="2">
    <original>S</original>
    <variation>L</variation>
    <location>
        <position position="138"/>
    </location>
</feature>
<feature type="sequence conflict" description="In Ref. 2; BAB86856." evidence="9" ref="2">
    <original>V</original>
    <variation>S</variation>
    <location>
        <position position="393"/>
    </location>
</feature>
<feature type="sequence conflict" description="In Ref. 2; BAB86856." evidence="9" ref="2">
    <original>E</original>
    <variation>D</variation>
    <location>
        <position position="407"/>
    </location>
</feature>
<feature type="sequence conflict" description="In Ref. 2; BAB86856." evidence="9" ref="2">
    <original>E</original>
    <variation>D</variation>
    <location>
        <position position="465"/>
    </location>
</feature>
<feature type="sequence conflict" description="In Ref. 2; BAB86856." evidence="9" ref="2">
    <original>V</original>
    <variation>L</variation>
    <location>
        <position position="487"/>
    </location>
</feature>
<feature type="sequence conflict" description="In Ref. 2; BAB86856." evidence="9" ref="2">
    <original>G</original>
    <variation>R</variation>
    <location>
        <position position="537"/>
    </location>
</feature>
<feature type="sequence conflict" description="In Ref. 2; BAB86856." evidence="9" ref="2">
    <original>K</original>
    <variation>R</variation>
    <location>
        <position position="626"/>
    </location>
</feature>
<feature type="sequence conflict" description="In Ref. 6; BAC25227." evidence="9" ref="6">
    <original>LQLLSR</original>
    <variation>CSCCQG</variation>
    <location>
        <begin position="745"/>
        <end position="750"/>
    </location>
</feature>
<feature type="sequence conflict" description="In Ref. 2; BAB86856." evidence="9" ref="2">
    <original>Q</original>
    <variation>R</variation>
    <location>
        <position position="904"/>
    </location>
</feature>
<organism>
    <name type="scientific">Mus musculus</name>
    <name type="common">Mouse</name>
    <dbReference type="NCBI Taxonomy" id="10090"/>
    <lineage>
        <taxon>Eukaryota</taxon>
        <taxon>Metazoa</taxon>
        <taxon>Chordata</taxon>
        <taxon>Craniata</taxon>
        <taxon>Vertebrata</taxon>
        <taxon>Euteleostomi</taxon>
        <taxon>Mammalia</taxon>
        <taxon>Eutheria</taxon>
        <taxon>Euarchontoglires</taxon>
        <taxon>Glires</taxon>
        <taxon>Rodentia</taxon>
        <taxon>Myomorpha</taxon>
        <taxon>Muroidea</taxon>
        <taxon>Muridae</taxon>
        <taxon>Murinae</taxon>
        <taxon>Mus</taxon>
        <taxon>Mus</taxon>
    </lineage>
</organism>
<dbReference type="EC" id="2.3.2.27"/>
<dbReference type="EMBL" id="AY974090">
    <property type="protein sequence ID" value="AAX84652.1"/>
    <property type="molecule type" value="mRNA"/>
</dbReference>
<dbReference type="EMBL" id="AB063290">
    <property type="protein sequence ID" value="BAB79447.1"/>
    <property type="status" value="ALT_FRAME"/>
    <property type="molecule type" value="mRNA"/>
</dbReference>
<dbReference type="EMBL" id="AB072336">
    <property type="protein sequence ID" value="BAB86856.1"/>
    <property type="status" value="ALT_FRAME"/>
    <property type="molecule type" value="mRNA"/>
</dbReference>
<dbReference type="EMBL" id="AL627405">
    <property type="status" value="NOT_ANNOTATED_CDS"/>
    <property type="molecule type" value="Genomic_DNA"/>
</dbReference>
<dbReference type="EMBL" id="CH466594">
    <property type="protein sequence ID" value="EDL15023.1"/>
    <property type="molecule type" value="Genomic_DNA"/>
</dbReference>
<dbReference type="EMBL" id="BC058086">
    <property type="status" value="NOT_ANNOTATED_CDS"/>
    <property type="molecule type" value="mRNA"/>
</dbReference>
<dbReference type="EMBL" id="AK008671">
    <property type="protein sequence ID" value="BAC25227.1"/>
    <property type="molecule type" value="mRNA"/>
</dbReference>
<dbReference type="CCDS" id="CCDS19035.1">
    <molecule id="Q8R516-2"/>
</dbReference>
<dbReference type="RefSeq" id="NP_001243037.2">
    <molecule id="Q8R516-2"/>
    <property type="nucleotide sequence ID" value="NM_001256108.2"/>
</dbReference>
<dbReference type="RefSeq" id="NP_001356091.1">
    <molecule id="Q8R516-2"/>
    <property type="nucleotide sequence ID" value="NM_001369162.1"/>
</dbReference>
<dbReference type="RefSeq" id="NP_001356092.1">
    <molecule id="Q8R516-2"/>
    <property type="nucleotide sequence ID" value="NM_001369163.1"/>
</dbReference>
<dbReference type="RefSeq" id="NP_660106.2">
    <molecule id="Q8R516-2"/>
    <property type="nucleotide sequence ID" value="NM_145124.3"/>
</dbReference>
<dbReference type="SMR" id="Q8R516"/>
<dbReference type="BioGRID" id="218188">
    <property type="interactions" value="17"/>
</dbReference>
<dbReference type="FunCoup" id="Q8R516">
    <property type="interactions" value="1163"/>
</dbReference>
<dbReference type="IntAct" id="Q8R516">
    <property type="interactions" value="1"/>
</dbReference>
<dbReference type="STRING" id="10090.ENSMUSP00000099465"/>
<dbReference type="GlyGen" id="Q8R516">
    <property type="glycosylation" value="1 site"/>
</dbReference>
<dbReference type="iPTMnet" id="Q8R516"/>
<dbReference type="PhosphoSitePlus" id="Q8R516"/>
<dbReference type="PaxDb" id="10090-ENSMUSP00000099465"/>
<dbReference type="ProteomicsDB" id="290231">
    <molecule id="Q8R516-1"/>
</dbReference>
<dbReference type="ProteomicsDB" id="290232">
    <molecule id="Q8R516-2"/>
</dbReference>
<dbReference type="ProteomicsDB" id="290233">
    <molecule id="Q8R516-3"/>
</dbReference>
<dbReference type="Pumba" id="Q8R516"/>
<dbReference type="Antibodypedia" id="26451">
    <property type="antibodies" value="110 antibodies from 25 providers"/>
</dbReference>
<dbReference type="DNASU" id="76580"/>
<dbReference type="Ensembl" id="ENSMUST00000103176.10">
    <molecule id="Q8R516-2"/>
    <property type="protein sequence ID" value="ENSMUSP00000099465.4"/>
    <property type="gene ID" value="ENSMUSG00000029060.18"/>
</dbReference>
<dbReference type="GeneID" id="76580"/>
<dbReference type="KEGG" id="mmu:76580"/>
<dbReference type="UCSC" id="uc008wee.2">
    <molecule id="Q8R516-1"/>
    <property type="organism name" value="mouse"/>
</dbReference>
<dbReference type="UCSC" id="uc008wef.2">
    <molecule id="Q8R516-2"/>
    <property type="organism name" value="mouse"/>
</dbReference>
<dbReference type="AGR" id="MGI:2679684"/>
<dbReference type="CTD" id="142678"/>
<dbReference type="MGI" id="MGI:2679684">
    <property type="gene designation" value="Mib2"/>
</dbReference>
<dbReference type="VEuPathDB" id="HostDB:ENSMUSG00000029060"/>
<dbReference type="eggNOG" id="KOG0504">
    <property type="taxonomic scope" value="Eukaryota"/>
</dbReference>
<dbReference type="eggNOG" id="KOG4582">
    <property type="taxonomic scope" value="Eukaryota"/>
</dbReference>
<dbReference type="GeneTree" id="ENSGT00940000158097"/>
<dbReference type="HOGENOM" id="CLU_007287_2_0_1"/>
<dbReference type="InParanoid" id="Q8R516"/>
<dbReference type="OMA" id="HGACEHC"/>
<dbReference type="PhylomeDB" id="Q8R516"/>
<dbReference type="TreeFam" id="TF324147"/>
<dbReference type="Reactome" id="R-MMU-5357786">
    <property type="pathway name" value="TNFR1-induced proapoptotic signaling"/>
</dbReference>
<dbReference type="Reactome" id="R-MMU-5357905">
    <property type="pathway name" value="Regulation of TNFR1 signaling"/>
</dbReference>
<dbReference type="Reactome" id="R-MMU-983168">
    <property type="pathway name" value="Antigen processing: Ubiquitination &amp; Proteasome degradation"/>
</dbReference>
<dbReference type="UniPathway" id="UPA00143"/>
<dbReference type="BioGRID-ORCS" id="76580">
    <property type="hits" value="5 hits in 79 CRISPR screens"/>
</dbReference>
<dbReference type="CD-CODE" id="CE726F99">
    <property type="entry name" value="Postsynaptic density"/>
</dbReference>
<dbReference type="ChiTaRS" id="Mib2">
    <property type="organism name" value="mouse"/>
</dbReference>
<dbReference type="PRO" id="PR:Q8R516"/>
<dbReference type="Proteomes" id="UP000000589">
    <property type="component" value="Chromosome 4"/>
</dbReference>
<dbReference type="RNAct" id="Q8R516">
    <property type="molecule type" value="protein"/>
</dbReference>
<dbReference type="Bgee" id="ENSMUSG00000029060">
    <property type="expression patterns" value="Expressed in embryonic brain and 245 other cell types or tissues"/>
</dbReference>
<dbReference type="ExpressionAtlas" id="Q8R516">
    <property type="expression patterns" value="baseline and differential"/>
</dbReference>
<dbReference type="GO" id="GO:0005769">
    <property type="term" value="C:early endosome"/>
    <property type="evidence" value="ECO:0000314"/>
    <property type="project" value="MGI"/>
</dbReference>
<dbReference type="GO" id="GO:0005886">
    <property type="term" value="C:plasma membrane"/>
    <property type="evidence" value="ECO:0000314"/>
    <property type="project" value="MGI"/>
</dbReference>
<dbReference type="GO" id="GO:0000151">
    <property type="term" value="C:ubiquitin ligase complex"/>
    <property type="evidence" value="ECO:0000314"/>
    <property type="project" value="MGI"/>
</dbReference>
<dbReference type="GO" id="GO:0003779">
    <property type="term" value="F:actin binding"/>
    <property type="evidence" value="ECO:0007669"/>
    <property type="project" value="UniProtKB-KW"/>
</dbReference>
<dbReference type="GO" id="GO:0061630">
    <property type="term" value="F:ubiquitin protein ligase activity"/>
    <property type="evidence" value="ECO:0000314"/>
    <property type="project" value="MGI"/>
</dbReference>
<dbReference type="GO" id="GO:0004842">
    <property type="term" value="F:ubiquitin-protein transferase activity"/>
    <property type="evidence" value="ECO:0000314"/>
    <property type="project" value="MGI"/>
</dbReference>
<dbReference type="GO" id="GO:0008270">
    <property type="term" value="F:zinc ion binding"/>
    <property type="evidence" value="ECO:0007669"/>
    <property type="project" value="UniProtKB-KW"/>
</dbReference>
<dbReference type="GO" id="GO:0007219">
    <property type="term" value="P:Notch signaling pathway"/>
    <property type="evidence" value="ECO:0007669"/>
    <property type="project" value="UniProtKB-KW"/>
</dbReference>
<dbReference type="GO" id="GO:0016567">
    <property type="term" value="P:protein ubiquitination"/>
    <property type="evidence" value="ECO:0000314"/>
    <property type="project" value="MGI"/>
</dbReference>
<dbReference type="CDD" id="cd16726">
    <property type="entry name" value="RING-HC_MIB2_rpt1"/>
    <property type="match status" value="1"/>
</dbReference>
<dbReference type="CDD" id="cd02339">
    <property type="entry name" value="ZZ_Mind_bomb"/>
    <property type="match status" value="1"/>
</dbReference>
<dbReference type="FunFam" id="1.25.40.20:FF:000075">
    <property type="entry name" value="E3 ubiquitin-protein ligase MIB2 isoform X1"/>
    <property type="match status" value="1"/>
</dbReference>
<dbReference type="FunFam" id="3.30.40.10:FF:000094">
    <property type="entry name" value="E3 ubiquitin-protein ligase MIB2 isoform X1"/>
    <property type="match status" value="1"/>
</dbReference>
<dbReference type="FunFam" id="3.30.40.10:FF:000250">
    <property type="entry name" value="E3 ubiquitin-protein ligase MIB2 isoform X2"/>
    <property type="match status" value="1"/>
</dbReference>
<dbReference type="FunFam" id="1.25.40.20:FF:000158">
    <property type="entry name" value="E3 ubiquitin-protein ligase MIB2 isoform X3"/>
    <property type="match status" value="1"/>
</dbReference>
<dbReference type="FunFam" id="2.30.30.40:FF:000044">
    <property type="entry name" value="E3 ubiquitin-protein ligase MIB2, putative"/>
    <property type="match status" value="1"/>
</dbReference>
<dbReference type="FunFam" id="3.30.60.90:FF:000004">
    <property type="entry name" value="Putative E3 ubiquitin-protein ligase MIB2"/>
    <property type="match status" value="1"/>
</dbReference>
<dbReference type="FunFam" id="2.30.30.40:FF:000078">
    <property type="entry name" value="Putative e3 ubiquitin-protein ligase mib2"/>
    <property type="match status" value="1"/>
</dbReference>
<dbReference type="Gene3D" id="3.30.60.90">
    <property type="match status" value="1"/>
</dbReference>
<dbReference type="Gene3D" id="1.25.40.20">
    <property type="entry name" value="Ankyrin repeat-containing domain"/>
    <property type="match status" value="3"/>
</dbReference>
<dbReference type="Gene3D" id="2.30.30.40">
    <property type="entry name" value="SH3 Domains"/>
    <property type="match status" value="2"/>
</dbReference>
<dbReference type="Gene3D" id="3.30.40.10">
    <property type="entry name" value="Zinc/RING finger domain, C3HC4 (zinc finger)"/>
    <property type="match status" value="2"/>
</dbReference>
<dbReference type="InterPro" id="IPR002110">
    <property type="entry name" value="Ankyrin_rpt"/>
</dbReference>
<dbReference type="InterPro" id="IPR036770">
    <property type="entry name" value="Ankyrin_rpt-contain_sf"/>
</dbReference>
<dbReference type="InterPro" id="IPR042056">
    <property type="entry name" value="MIB1/2_ZZ"/>
</dbReference>
<dbReference type="InterPro" id="IPR010606">
    <property type="entry name" value="Mib_Herc2"/>
</dbReference>
<dbReference type="InterPro" id="IPR037252">
    <property type="entry name" value="Mib_Herc2_sf"/>
</dbReference>
<dbReference type="InterPro" id="IPR040847">
    <property type="entry name" value="SH3_15"/>
</dbReference>
<dbReference type="InterPro" id="IPR001841">
    <property type="entry name" value="Znf_RING"/>
</dbReference>
<dbReference type="InterPro" id="IPR013083">
    <property type="entry name" value="Znf_RING/FYVE/PHD"/>
</dbReference>
<dbReference type="InterPro" id="IPR000433">
    <property type="entry name" value="Znf_ZZ"/>
</dbReference>
<dbReference type="InterPro" id="IPR043145">
    <property type="entry name" value="Znf_ZZ_sf"/>
</dbReference>
<dbReference type="PANTHER" id="PTHR24202">
    <property type="entry name" value="E3 UBIQUITIN-PROTEIN LIGASE MIB2"/>
    <property type="match status" value="1"/>
</dbReference>
<dbReference type="PANTHER" id="PTHR24202:SF4">
    <property type="entry name" value="E3 UBIQUITIN-PROTEIN LIGASE MIB2-RELATED"/>
    <property type="match status" value="1"/>
</dbReference>
<dbReference type="Pfam" id="PF00023">
    <property type="entry name" value="Ank"/>
    <property type="match status" value="2"/>
</dbReference>
<dbReference type="Pfam" id="PF12796">
    <property type="entry name" value="Ank_2"/>
    <property type="match status" value="2"/>
</dbReference>
<dbReference type="Pfam" id="PF06701">
    <property type="entry name" value="MIB_HERC2"/>
    <property type="match status" value="2"/>
</dbReference>
<dbReference type="Pfam" id="PF18346">
    <property type="entry name" value="SH3_15"/>
    <property type="match status" value="2"/>
</dbReference>
<dbReference type="Pfam" id="PF13920">
    <property type="entry name" value="zf-C3HC4_3"/>
    <property type="match status" value="2"/>
</dbReference>
<dbReference type="Pfam" id="PF00569">
    <property type="entry name" value="ZZ"/>
    <property type="match status" value="1"/>
</dbReference>
<dbReference type="PRINTS" id="PR01415">
    <property type="entry name" value="ANKYRIN"/>
</dbReference>
<dbReference type="SMART" id="SM00248">
    <property type="entry name" value="ANK"/>
    <property type="match status" value="8"/>
</dbReference>
<dbReference type="SMART" id="SM00184">
    <property type="entry name" value="RING"/>
    <property type="match status" value="2"/>
</dbReference>
<dbReference type="SMART" id="SM00291">
    <property type="entry name" value="ZnF_ZZ"/>
    <property type="match status" value="1"/>
</dbReference>
<dbReference type="SUPFAM" id="SSF48403">
    <property type="entry name" value="Ankyrin repeat"/>
    <property type="match status" value="1"/>
</dbReference>
<dbReference type="SUPFAM" id="SSF159034">
    <property type="entry name" value="Mib/herc2 domain-like"/>
    <property type="match status" value="2"/>
</dbReference>
<dbReference type="SUPFAM" id="SSF57850">
    <property type="entry name" value="RING/U-box"/>
    <property type="match status" value="2"/>
</dbReference>
<dbReference type="PROSITE" id="PS50297">
    <property type="entry name" value="ANK_REP_REGION"/>
    <property type="match status" value="1"/>
</dbReference>
<dbReference type="PROSITE" id="PS50088">
    <property type="entry name" value="ANK_REPEAT"/>
    <property type="match status" value="5"/>
</dbReference>
<dbReference type="PROSITE" id="PS51416">
    <property type="entry name" value="MIB_HERC2"/>
    <property type="match status" value="2"/>
</dbReference>
<dbReference type="PROSITE" id="PS50089">
    <property type="entry name" value="ZF_RING_2"/>
    <property type="match status" value="2"/>
</dbReference>
<dbReference type="PROSITE" id="PS01357">
    <property type="entry name" value="ZF_ZZ_1"/>
    <property type="match status" value="1"/>
</dbReference>
<dbReference type="PROSITE" id="PS50135">
    <property type="entry name" value="ZF_ZZ_2"/>
    <property type="match status" value="1"/>
</dbReference>
<evidence type="ECO:0000250" key="1"/>
<evidence type="ECO:0000250" key="2">
    <source>
        <dbReference type="UniProtKB" id="Q96AX9"/>
    </source>
</evidence>
<evidence type="ECO:0000255" key="3">
    <source>
        <dbReference type="PROSITE-ProRule" id="PRU00175"/>
    </source>
</evidence>
<evidence type="ECO:0000255" key="4">
    <source>
        <dbReference type="PROSITE-ProRule" id="PRU00228"/>
    </source>
</evidence>
<evidence type="ECO:0000255" key="5">
    <source>
        <dbReference type="PROSITE-ProRule" id="PRU00749"/>
    </source>
</evidence>
<evidence type="ECO:0000269" key="6">
    <source>
    </source>
</evidence>
<evidence type="ECO:0000303" key="7">
    <source>
    </source>
</evidence>
<evidence type="ECO:0000303" key="8">
    <source ref="2"/>
</evidence>
<evidence type="ECO:0000305" key="9"/>
<gene>
    <name type="primary">Mib2</name>
    <name type="synonym">Skd</name>
</gene>
<protein>
    <recommendedName>
        <fullName>E3 ubiquitin-protein ligase MIB2</fullName>
        <ecNumber>2.3.2.27</ecNumber>
    </recommendedName>
    <alternativeName>
        <fullName>Dystrophin-like protein</fullName>
        <shortName>Dyslike</shortName>
    </alternativeName>
    <alternativeName>
        <fullName>Mind bomb homolog 2</fullName>
        <shortName>Mind bomb-2</shortName>
    </alternativeName>
    <alternativeName>
        <fullName evidence="9">RING-type E3 ubiquitin transferase MIB2</fullName>
    </alternativeName>
    <alternativeName>
        <fullName>Skeletrophin</fullName>
    </alternativeName>
</protein>
<proteinExistence type="evidence at protein level"/>
<sequence>MDLDPHAGVQVGMRVVRGMDWKWGQQDGGEGGVGTVVELGRHGSPSTPDRTVVVQWDQGTRTNYRAGYQGAHDLLLYDNAQIGIRHPNIICDCCKKHGLRGMRWKCRVCFDYDLCTQCYMHNKHDLTHAFERYETSHSRPVTLSPRQGLPRIPLRGIFQGAKVVRGPDWEWGSQDGGEGKTGRVVDIRGWDVETGRSVASVTWADGTTNVYRVGHKGKVDLRCVGEAAGGFYYKEHLPKLGKPAELQRRVSADGQPFQRGDKVKCLLDTDVLRDMQEGHGGWNPRMAEFIGQMGTVHRITDRGDVRVQFNHETRWTFHPGALTKHNSFWVGDVVRVIGDLDTVKRLQAGHGEWTDDMAPALGRVGKVVKVFGDGNLRVAVGGQRWTFSPSCLVAYRPEEDANLDVAERARENKSAASVSVAGSLSVALDKLRTQKSDPEHPGRLVVEAALGNVARALDLLRRHPEQASYHPALVVDTKNQGRTALQVAAYLGQVELVRLLLQARASMDLPDDEGNTVLHYTAMGNQPEATRVLLSAGCAVDARNGTRSTALHVAVQRGFLEVVKILCERGCDVNLPDAHADTPLHSAISAGAGASSIVEVLTEVPGIDVTATNSQGFTLLHHASLKGHVLAVRKILARARQLVDAKKEDGFTALHLAALNNHREVAQVLIREGRCDVNVRNRKLQSPLHLAVQQAHLGLVPLLVDAGCSVNTEDEEGDTALHVALQRHQLLPLVADRAGGDPGPLQLLSRLQASGLPGCTELTVGAAVACFLALEGADVSYANHRGRSPLDLATEGRVLKALQGCAQRFRERQAGGGGGVPPGPRHVLSTPNTVTNLHVSGTAGPEAAECLVCSELALLILFSPCQHRTVCEECARRMKKCIRCQVVISKKLRPDGSEVVNAIQVPGPPRQLVEELQSRYRQMEERITCPICIDSHIRLVFQCGHGACAPCGAALNACPICRQPIRDRIQIFV</sequence>
<accession>Q8R516</accession>
<accession>A2A9P9</accession>
<accession>Q52QU8</accession>
<accession>Q6PEF6</accession>
<accession>Q8C1N7</accession>
<accession>Q8VIB4</accession>
<keyword id="KW-0009">Actin-binding</keyword>
<keyword id="KW-0025">Alternative splicing</keyword>
<keyword id="KW-0040">ANK repeat</keyword>
<keyword id="KW-0963">Cytoplasm</keyword>
<keyword id="KW-0903">Direct protein sequencing</keyword>
<keyword id="KW-0967">Endosome</keyword>
<keyword id="KW-0479">Metal-binding</keyword>
<keyword id="KW-0914">Notch signaling pathway</keyword>
<keyword id="KW-0597">Phosphoprotein</keyword>
<keyword id="KW-1185">Reference proteome</keyword>
<keyword id="KW-0677">Repeat</keyword>
<keyword id="KW-0808">Transferase</keyword>
<keyword id="KW-0832">Ubl conjugation</keyword>
<keyword id="KW-0833">Ubl conjugation pathway</keyword>
<keyword id="KW-0862">Zinc</keyword>
<keyword id="KW-0863">Zinc-finger</keyword>
<reference key="1">
    <citation type="journal article" date="2005" name="J. Biol. Chem.">
        <title>Mind bomb-2 is an E3 ligase for Notch ligand.</title>
        <authorList>
            <person name="Koo B.-K."/>
            <person name="Yoon K.-J."/>
            <person name="Yoo K.-W."/>
            <person name="Lim H.-S."/>
            <person name="Song R."/>
            <person name="So J.-H."/>
            <person name="Kim C.-H."/>
            <person name="Kong Y.-Y."/>
        </authorList>
    </citation>
    <scope>NUCLEOTIDE SEQUENCE [MRNA] (ISOFORM 1)</scope>
    <scope>ENZYME ACTIVITY</scope>
    <scope>FUNCTION</scope>
    <scope>SUBCELLULAR LOCATION</scope>
    <scope>TISSUE SPECIFICITY</scope>
    <scope>DEVELOPMENTAL STAGE</scope>
    <scope>UBIQUITINATION</scope>
    <scope>MUTAGENESIS OF CYS-874 AND CYS-951</scope>
    <source>
        <strain>C57BL/6J</strain>
        <tissue>Brain</tissue>
        <tissue>Thymus</tissue>
    </source>
</reference>
<reference key="2">
    <citation type="submission" date="2001-06" db="EMBL/GenBank/DDBJ databases">
        <authorList>
            <person name="Takeuchi T."/>
        </authorList>
    </citation>
    <scope>NUCLEOTIDE SEQUENCE [MRNA] (ISOFORM 2)</scope>
    <source>
        <tissue>Heart</tissue>
    </source>
</reference>
<reference key="3">
    <citation type="journal article" date="2009" name="PLoS Biol.">
        <title>Lineage-specific biology revealed by a finished genome assembly of the mouse.</title>
        <authorList>
            <person name="Church D.M."/>
            <person name="Goodstadt L."/>
            <person name="Hillier L.W."/>
            <person name="Zody M.C."/>
            <person name="Goldstein S."/>
            <person name="She X."/>
            <person name="Bult C.J."/>
            <person name="Agarwala R."/>
            <person name="Cherry J.L."/>
            <person name="DiCuccio M."/>
            <person name="Hlavina W."/>
            <person name="Kapustin Y."/>
            <person name="Meric P."/>
            <person name="Maglott D."/>
            <person name="Birtle Z."/>
            <person name="Marques A.C."/>
            <person name="Graves T."/>
            <person name="Zhou S."/>
            <person name="Teague B."/>
            <person name="Potamousis K."/>
            <person name="Churas C."/>
            <person name="Place M."/>
            <person name="Herschleb J."/>
            <person name="Runnheim R."/>
            <person name="Forrest D."/>
            <person name="Amos-Landgraf J."/>
            <person name="Schwartz D.C."/>
            <person name="Cheng Z."/>
            <person name="Lindblad-Toh K."/>
            <person name="Eichler E.E."/>
            <person name="Ponting C.P."/>
        </authorList>
    </citation>
    <scope>NUCLEOTIDE SEQUENCE [LARGE SCALE GENOMIC DNA]</scope>
    <source>
        <strain>C57BL/6J</strain>
    </source>
</reference>
<reference key="4">
    <citation type="submission" date="2005-07" db="EMBL/GenBank/DDBJ databases">
        <authorList>
            <person name="Mural R.J."/>
            <person name="Adams M.D."/>
            <person name="Myers E.W."/>
            <person name="Smith H.O."/>
            <person name="Venter J.C."/>
        </authorList>
    </citation>
    <scope>NUCLEOTIDE SEQUENCE [LARGE SCALE GENOMIC DNA]</scope>
</reference>
<reference key="5">
    <citation type="journal article" date="2004" name="Genome Res.">
        <title>The status, quality, and expansion of the NIH full-length cDNA project: the Mammalian Gene Collection (MGC).</title>
        <authorList>
            <consortium name="The MGC Project Team"/>
        </authorList>
    </citation>
    <scope>NUCLEOTIDE SEQUENCE [LARGE SCALE MRNA] (ISOFORM 3)</scope>
    <source>
        <strain>C57BL/6J</strain>
        <tissue>Brain</tissue>
    </source>
</reference>
<reference key="6">
    <citation type="journal article" date="2005" name="Science">
        <title>The transcriptional landscape of the mammalian genome.</title>
        <authorList>
            <person name="Carninci P."/>
            <person name="Kasukawa T."/>
            <person name="Katayama S."/>
            <person name="Gough J."/>
            <person name="Frith M.C."/>
            <person name="Maeda N."/>
            <person name="Oyama R."/>
            <person name="Ravasi T."/>
            <person name="Lenhard B."/>
            <person name="Wells C."/>
            <person name="Kodzius R."/>
            <person name="Shimokawa K."/>
            <person name="Bajic V.B."/>
            <person name="Brenner S.E."/>
            <person name="Batalov S."/>
            <person name="Forrest A.R."/>
            <person name="Zavolan M."/>
            <person name="Davis M.J."/>
            <person name="Wilming L.G."/>
            <person name="Aidinis V."/>
            <person name="Allen J.E."/>
            <person name="Ambesi-Impiombato A."/>
            <person name="Apweiler R."/>
            <person name="Aturaliya R.N."/>
            <person name="Bailey T.L."/>
            <person name="Bansal M."/>
            <person name="Baxter L."/>
            <person name="Beisel K.W."/>
            <person name="Bersano T."/>
            <person name="Bono H."/>
            <person name="Chalk A.M."/>
            <person name="Chiu K.P."/>
            <person name="Choudhary V."/>
            <person name="Christoffels A."/>
            <person name="Clutterbuck D.R."/>
            <person name="Crowe M.L."/>
            <person name="Dalla E."/>
            <person name="Dalrymple B.P."/>
            <person name="de Bono B."/>
            <person name="Della Gatta G."/>
            <person name="di Bernardo D."/>
            <person name="Down T."/>
            <person name="Engstrom P."/>
            <person name="Fagiolini M."/>
            <person name="Faulkner G."/>
            <person name="Fletcher C.F."/>
            <person name="Fukushima T."/>
            <person name="Furuno M."/>
            <person name="Futaki S."/>
            <person name="Gariboldi M."/>
            <person name="Georgii-Hemming P."/>
            <person name="Gingeras T.R."/>
            <person name="Gojobori T."/>
            <person name="Green R.E."/>
            <person name="Gustincich S."/>
            <person name="Harbers M."/>
            <person name="Hayashi Y."/>
            <person name="Hensch T.K."/>
            <person name="Hirokawa N."/>
            <person name="Hill D."/>
            <person name="Huminiecki L."/>
            <person name="Iacono M."/>
            <person name="Ikeo K."/>
            <person name="Iwama A."/>
            <person name="Ishikawa T."/>
            <person name="Jakt M."/>
            <person name="Kanapin A."/>
            <person name="Katoh M."/>
            <person name="Kawasawa Y."/>
            <person name="Kelso J."/>
            <person name="Kitamura H."/>
            <person name="Kitano H."/>
            <person name="Kollias G."/>
            <person name="Krishnan S.P."/>
            <person name="Kruger A."/>
            <person name="Kummerfeld S.K."/>
            <person name="Kurochkin I.V."/>
            <person name="Lareau L.F."/>
            <person name="Lazarevic D."/>
            <person name="Lipovich L."/>
            <person name="Liu J."/>
            <person name="Liuni S."/>
            <person name="McWilliam S."/>
            <person name="Madan Babu M."/>
            <person name="Madera M."/>
            <person name="Marchionni L."/>
            <person name="Matsuda H."/>
            <person name="Matsuzawa S."/>
            <person name="Miki H."/>
            <person name="Mignone F."/>
            <person name="Miyake S."/>
            <person name="Morris K."/>
            <person name="Mottagui-Tabar S."/>
            <person name="Mulder N."/>
            <person name="Nakano N."/>
            <person name="Nakauchi H."/>
            <person name="Ng P."/>
            <person name="Nilsson R."/>
            <person name="Nishiguchi S."/>
            <person name="Nishikawa S."/>
            <person name="Nori F."/>
            <person name="Ohara O."/>
            <person name="Okazaki Y."/>
            <person name="Orlando V."/>
            <person name="Pang K.C."/>
            <person name="Pavan W.J."/>
            <person name="Pavesi G."/>
            <person name="Pesole G."/>
            <person name="Petrovsky N."/>
            <person name="Piazza S."/>
            <person name="Reed J."/>
            <person name="Reid J.F."/>
            <person name="Ring B.Z."/>
            <person name="Ringwald M."/>
            <person name="Rost B."/>
            <person name="Ruan Y."/>
            <person name="Salzberg S.L."/>
            <person name="Sandelin A."/>
            <person name="Schneider C."/>
            <person name="Schoenbach C."/>
            <person name="Sekiguchi K."/>
            <person name="Semple C.A."/>
            <person name="Seno S."/>
            <person name="Sessa L."/>
            <person name="Sheng Y."/>
            <person name="Shibata Y."/>
            <person name="Shimada H."/>
            <person name="Shimada K."/>
            <person name="Silva D."/>
            <person name="Sinclair B."/>
            <person name="Sperling S."/>
            <person name="Stupka E."/>
            <person name="Sugiura K."/>
            <person name="Sultana R."/>
            <person name="Takenaka Y."/>
            <person name="Taki K."/>
            <person name="Tammoja K."/>
            <person name="Tan S.L."/>
            <person name="Tang S."/>
            <person name="Taylor M.S."/>
            <person name="Tegner J."/>
            <person name="Teichmann S.A."/>
            <person name="Ueda H.R."/>
            <person name="van Nimwegen E."/>
            <person name="Verardo R."/>
            <person name="Wei C.L."/>
            <person name="Yagi K."/>
            <person name="Yamanishi H."/>
            <person name="Zabarovsky E."/>
            <person name="Zhu S."/>
            <person name="Zimmer A."/>
            <person name="Hide W."/>
            <person name="Bult C."/>
            <person name="Grimmond S.M."/>
            <person name="Teasdale R.D."/>
            <person name="Liu E.T."/>
            <person name="Brusic V."/>
            <person name="Quackenbush J."/>
            <person name="Wahlestedt C."/>
            <person name="Mattick J.S."/>
            <person name="Hume D.A."/>
            <person name="Kai C."/>
            <person name="Sasaki D."/>
            <person name="Tomaru Y."/>
            <person name="Fukuda S."/>
            <person name="Kanamori-Katayama M."/>
            <person name="Suzuki M."/>
            <person name="Aoki J."/>
            <person name="Arakawa T."/>
            <person name="Iida J."/>
            <person name="Imamura K."/>
            <person name="Itoh M."/>
            <person name="Kato T."/>
            <person name="Kawaji H."/>
            <person name="Kawagashira N."/>
            <person name="Kawashima T."/>
            <person name="Kojima M."/>
            <person name="Kondo S."/>
            <person name="Konno H."/>
            <person name="Nakano K."/>
            <person name="Ninomiya N."/>
            <person name="Nishio T."/>
            <person name="Okada M."/>
            <person name="Plessy C."/>
            <person name="Shibata K."/>
            <person name="Shiraki T."/>
            <person name="Suzuki S."/>
            <person name="Tagami M."/>
            <person name="Waki K."/>
            <person name="Watahiki A."/>
            <person name="Okamura-Oho Y."/>
            <person name="Suzuki H."/>
            <person name="Kawai J."/>
            <person name="Hayashizaki Y."/>
        </authorList>
    </citation>
    <scope>NUCLEOTIDE SEQUENCE [LARGE SCALE MRNA] OF 604-750</scope>
    <source>
        <strain>C57BL/6J</strain>
        <tissue>Stomach</tissue>
    </source>
</reference>
<reference key="7">
    <citation type="submission" date="2009-01" db="UniProtKB">
        <authorList>
            <person name="Lubec G."/>
            <person name="Sunyer B."/>
            <person name="Chen W.-Q."/>
        </authorList>
    </citation>
    <scope>PROTEIN SEQUENCE OF 920-926</scope>
    <scope>IDENTIFICATION BY MASS SPECTROMETRY</scope>
    <source>
        <strain>OF1</strain>
        <tissue>Hippocampus</tissue>
    </source>
</reference>
<name>MIB2_MOUSE</name>